<name>Y9I2_ENCCU</name>
<evidence type="ECO:0000256" key="1">
    <source>
        <dbReference type="SAM" id="MobiDB-lite"/>
    </source>
</evidence>
<evidence type="ECO:0000269" key="2">
    <source>
    </source>
</evidence>
<gene>
    <name type="ordered locus">ECU09_1820</name>
</gene>
<feature type="chain" id="PRO_0000382782" description="Uncharacterized protein ECU09_1820">
    <location>
        <begin position="1"/>
        <end position="232"/>
    </location>
</feature>
<feature type="region of interest" description="Disordered" evidence="1">
    <location>
        <begin position="119"/>
        <end position="145"/>
    </location>
</feature>
<feature type="compositionally biased region" description="Basic and acidic residues" evidence="1">
    <location>
        <begin position="123"/>
        <end position="133"/>
    </location>
</feature>
<reference key="1">
    <citation type="journal article" date="2001" name="Nature">
        <title>Genome sequence and gene compaction of the eukaryote parasite Encephalitozoon cuniculi.</title>
        <authorList>
            <person name="Katinka M.D."/>
            <person name="Duprat S."/>
            <person name="Cornillot E."/>
            <person name="Metenier G."/>
            <person name="Thomarat F."/>
            <person name="Prensier G."/>
            <person name="Barbe V."/>
            <person name="Peyretaillade E."/>
            <person name="Brottier P."/>
            <person name="Wincker P."/>
            <person name="Delbac F."/>
            <person name="El Alaoui H."/>
            <person name="Peyret P."/>
            <person name="Saurin W."/>
            <person name="Gouy M."/>
            <person name="Weissenbach J."/>
            <person name="Vivares C.P."/>
        </authorList>
    </citation>
    <scope>NUCLEOTIDE SEQUENCE [LARGE SCALE GENOMIC DNA]</scope>
    <source>
        <strain>GB-M1</strain>
    </source>
</reference>
<reference key="2">
    <citation type="journal article" date="2006" name="Proteomics">
        <title>Proteomic analysis of the eukaryotic parasite Encephalitozoon cuniculi (microsporidia): a reference map for proteins expressed in late sporogonial stages.</title>
        <authorList>
            <person name="Brosson D."/>
            <person name="Kuhn L."/>
            <person name="Delbac F."/>
            <person name="Garin J."/>
            <person name="Vivares C.P."/>
            <person name="Texier C."/>
        </authorList>
    </citation>
    <scope>IDENTIFICATION BY MASS SPECTROMETRY [LARGE SCALE ANALYSIS]</scope>
    <scope>DEVELOPMENTAL STAGE</scope>
</reference>
<keyword id="KW-1185">Reference proteome</keyword>
<sequence length="232" mass="26184">MDSEARIKKIMEATGCSHDVARKAENESQGNLDLAIKIAGRKGNVLYSGGKSGLYVEERPSRKSITQYKNGILVEDKFYDFSVDDNIRLREMLEKKTFDASLLGLHGDTAEVIYTEKPDEEYRENSKAPEAKARPSFVGEGRRLGDSSREIPHVNIPDMLEIAKDGNVLFKVMIGSKRVTVRMLRSQTVGDFFDYIERYYDFGLVLSSNGKEIPPSHSVEEISNKLVLLSRR</sequence>
<proteinExistence type="evidence at protein level"/>
<dbReference type="EMBL" id="AL590451">
    <property type="protein sequence ID" value="CAD27155.1"/>
    <property type="molecule type" value="Genomic_DNA"/>
</dbReference>
<dbReference type="RefSeq" id="NP_001402436.1">
    <property type="nucleotide sequence ID" value="NM_001415503.1"/>
</dbReference>
<dbReference type="RefSeq" id="XP_955736.1">
    <property type="nucleotide sequence ID" value="XM_950643.1"/>
</dbReference>
<dbReference type="SMR" id="Q8STL3"/>
<dbReference type="GeneID" id="860523"/>
<dbReference type="VEuPathDB" id="MicrosporidiaDB:ECU09_1820"/>
<dbReference type="HOGENOM" id="CLU_1210154_0_0_1"/>
<dbReference type="InParanoid" id="Q8STL3"/>
<dbReference type="OMA" id="IPKIIVM"/>
<dbReference type="OrthoDB" id="2190150at2759"/>
<dbReference type="Proteomes" id="UP000000819">
    <property type="component" value="Chromosome IX"/>
</dbReference>
<accession>Q8STL3</accession>
<organism>
    <name type="scientific">Encephalitozoon cuniculi (strain GB-M1)</name>
    <name type="common">Microsporidian parasite</name>
    <dbReference type="NCBI Taxonomy" id="284813"/>
    <lineage>
        <taxon>Eukaryota</taxon>
        <taxon>Fungi</taxon>
        <taxon>Fungi incertae sedis</taxon>
        <taxon>Microsporidia</taxon>
        <taxon>Unikaryonidae</taxon>
        <taxon>Encephalitozoon</taxon>
    </lineage>
</organism>
<comment type="developmental stage">
    <text evidence="2">Expressed in late sporogonial stages.</text>
</comment>
<protein>
    <recommendedName>
        <fullName>Uncharacterized protein ECU09_1820</fullName>
    </recommendedName>
</protein>